<sequence length="208" mass="22751">MPNLDKLIIGFDHALRTLLTPAQTLRPVPGTQLPEAELNDLEKSESAALMRVNHVGEICAQALYQGQALTARNAEVQQTLAQAAREETEHLAWTERRINELSGRKSLLNPLWYGGSFAIGAFAGLLGDKWNLGFLAETERQVSAHLGGHLSRLPHADEKSRAIVTQMQIDEAGHATTAVAYGGAELPMPVKLVMRMASSVMTRTAYWV</sequence>
<reference key="1">
    <citation type="submission" date="2005-08" db="EMBL/GenBank/DDBJ databases">
        <title>Complete sequence of chromosome 1 of Nitrosospira multiformis ATCC 25196.</title>
        <authorList>
            <person name="Copeland A."/>
            <person name="Lucas S."/>
            <person name="Lapidus A."/>
            <person name="Barry K."/>
            <person name="Detter J.C."/>
            <person name="Glavina T."/>
            <person name="Hammon N."/>
            <person name="Israni S."/>
            <person name="Pitluck S."/>
            <person name="Chain P."/>
            <person name="Malfatti S."/>
            <person name="Shin M."/>
            <person name="Vergez L."/>
            <person name="Schmutz J."/>
            <person name="Larimer F."/>
            <person name="Land M."/>
            <person name="Hauser L."/>
            <person name="Kyrpides N."/>
            <person name="Lykidis A."/>
            <person name="Richardson P."/>
        </authorList>
    </citation>
    <scope>NUCLEOTIDE SEQUENCE [LARGE SCALE GENOMIC DNA]</scope>
    <source>
        <strain>ATCC 25196 / NCIMB 11849 / C 71</strain>
    </source>
</reference>
<accession>Q2YC72</accession>
<proteinExistence type="inferred from homology"/>
<evidence type="ECO:0000255" key="1">
    <source>
        <dbReference type="HAMAP-Rule" id="MF_01658"/>
    </source>
</evidence>
<evidence type="ECO:0000305" key="2"/>
<protein>
    <recommendedName>
        <fullName evidence="1">3-demethoxyubiquinol 3-hydroxylase</fullName>
        <shortName evidence="1">DMQ hydroxylase</shortName>
        <ecNumber evidence="1">1.14.99.60</ecNumber>
    </recommendedName>
    <alternativeName>
        <fullName evidence="1">2-nonaprenyl-3-methyl-6-methoxy-1,4-benzoquinol hydroxylase</fullName>
    </alternativeName>
</protein>
<feature type="chain" id="PRO_0000338703" description="3-demethoxyubiquinol 3-hydroxylase">
    <location>
        <begin position="1"/>
        <end position="208"/>
    </location>
</feature>
<feature type="binding site" evidence="1">
    <location>
        <position position="57"/>
    </location>
    <ligand>
        <name>Fe cation</name>
        <dbReference type="ChEBI" id="CHEBI:24875"/>
        <label>1</label>
    </ligand>
</feature>
<feature type="binding site" evidence="1">
    <location>
        <position position="87"/>
    </location>
    <ligand>
        <name>Fe cation</name>
        <dbReference type="ChEBI" id="CHEBI:24875"/>
        <label>1</label>
    </ligand>
</feature>
<feature type="binding site" evidence="1">
    <location>
        <position position="87"/>
    </location>
    <ligand>
        <name>Fe cation</name>
        <dbReference type="ChEBI" id="CHEBI:24875"/>
        <label>2</label>
    </ligand>
</feature>
<feature type="binding site" evidence="1">
    <location>
        <position position="90"/>
    </location>
    <ligand>
        <name>Fe cation</name>
        <dbReference type="ChEBI" id="CHEBI:24875"/>
        <label>1</label>
    </ligand>
</feature>
<feature type="binding site" evidence="1">
    <location>
        <position position="139"/>
    </location>
    <ligand>
        <name>Fe cation</name>
        <dbReference type="ChEBI" id="CHEBI:24875"/>
        <label>2</label>
    </ligand>
</feature>
<feature type="binding site" evidence="1">
    <location>
        <position position="171"/>
    </location>
    <ligand>
        <name>Fe cation</name>
        <dbReference type="ChEBI" id="CHEBI:24875"/>
        <label>1</label>
    </ligand>
</feature>
<feature type="binding site" evidence="1">
    <location>
        <position position="171"/>
    </location>
    <ligand>
        <name>Fe cation</name>
        <dbReference type="ChEBI" id="CHEBI:24875"/>
        <label>2</label>
    </ligand>
</feature>
<feature type="binding site" evidence="1">
    <location>
        <position position="174"/>
    </location>
    <ligand>
        <name>Fe cation</name>
        <dbReference type="ChEBI" id="CHEBI:24875"/>
        <label>2</label>
    </ligand>
</feature>
<keyword id="KW-1003">Cell membrane</keyword>
<keyword id="KW-0408">Iron</keyword>
<keyword id="KW-0472">Membrane</keyword>
<keyword id="KW-0479">Metal-binding</keyword>
<keyword id="KW-0503">Monooxygenase</keyword>
<keyword id="KW-0560">Oxidoreductase</keyword>
<keyword id="KW-1185">Reference proteome</keyword>
<keyword id="KW-0831">Ubiquinone biosynthesis</keyword>
<gene>
    <name evidence="1" type="primary">coq7</name>
    <name type="ordered locus">Nmul_A0341</name>
</gene>
<name>COQ7_NITMU</name>
<dbReference type="EC" id="1.14.99.60" evidence="1"/>
<dbReference type="EMBL" id="CP000103">
    <property type="protein sequence ID" value="ABB73649.1"/>
    <property type="status" value="ALT_INIT"/>
    <property type="molecule type" value="Genomic_DNA"/>
</dbReference>
<dbReference type="RefSeq" id="WP_041352330.1">
    <property type="nucleotide sequence ID" value="NC_007614.1"/>
</dbReference>
<dbReference type="SMR" id="Q2YC72"/>
<dbReference type="STRING" id="323848.Nmul_A0341"/>
<dbReference type="KEGG" id="nmu:Nmul_A0341"/>
<dbReference type="eggNOG" id="COG2941">
    <property type="taxonomic scope" value="Bacteria"/>
</dbReference>
<dbReference type="HOGENOM" id="CLU_088601_0_0_4"/>
<dbReference type="OrthoDB" id="5192789at2"/>
<dbReference type="UniPathway" id="UPA00232"/>
<dbReference type="Proteomes" id="UP000002718">
    <property type="component" value="Chromosome"/>
</dbReference>
<dbReference type="GO" id="GO:0005886">
    <property type="term" value="C:plasma membrane"/>
    <property type="evidence" value="ECO:0007669"/>
    <property type="project" value="UniProtKB-SubCell"/>
</dbReference>
<dbReference type="GO" id="GO:0008682">
    <property type="term" value="F:3-demethoxyubiquinol 3-hydroxylase activity"/>
    <property type="evidence" value="ECO:0007669"/>
    <property type="project" value="UniProtKB-EC"/>
</dbReference>
<dbReference type="GO" id="GO:0046872">
    <property type="term" value="F:metal ion binding"/>
    <property type="evidence" value="ECO:0007669"/>
    <property type="project" value="UniProtKB-KW"/>
</dbReference>
<dbReference type="GO" id="GO:0006744">
    <property type="term" value="P:ubiquinone biosynthetic process"/>
    <property type="evidence" value="ECO:0007669"/>
    <property type="project" value="UniProtKB-UniRule"/>
</dbReference>
<dbReference type="CDD" id="cd01042">
    <property type="entry name" value="DMQH"/>
    <property type="match status" value="1"/>
</dbReference>
<dbReference type="Gene3D" id="1.20.1260.10">
    <property type="match status" value="1"/>
</dbReference>
<dbReference type="HAMAP" id="MF_01658">
    <property type="entry name" value="COQ7"/>
    <property type="match status" value="1"/>
</dbReference>
<dbReference type="InterPro" id="IPR047809">
    <property type="entry name" value="COQ7_proteobact"/>
</dbReference>
<dbReference type="InterPro" id="IPR012347">
    <property type="entry name" value="Ferritin-like"/>
</dbReference>
<dbReference type="InterPro" id="IPR009078">
    <property type="entry name" value="Ferritin-like_SF"/>
</dbReference>
<dbReference type="InterPro" id="IPR011566">
    <property type="entry name" value="Ubq_synth_Coq7"/>
</dbReference>
<dbReference type="NCBIfam" id="NF033656">
    <property type="entry name" value="DMQ_monoox_COQ7"/>
    <property type="match status" value="1"/>
</dbReference>
<dbReference type="PANTHER" id="PTHR11237:SF4">
    <property type="entry name" value="5-DEMETHOXYUBIQUINONE HYDROXYLASE, MITOCHONDRIAL"/>
    <property type="match status" value="1"/>
</dbReference>
<dbReference type="PANTHER" id="PTHR11237">
    <property type="entry name" value="COENZYME Q10 BIOSYNTHESIS PROTEIN 7"/>
    <property type="match status" value="1"/>
</dbReference>
<dbReference type="Pfam" id="PF03232">
    <property type="entry name" value="COQ7"/>
    <property type="match status" value="1"/>
</dbReference>
<dbReference type="SUPFAM" id="SSF47240">
    <property type="entry name" value="Ferritin-like"/>
    <property type="match status" value="1"/>
</dbReference>
<comment type="function">
    <text evidence="1">Catalyzes the hydroxylation of 2-nonaprenyl-3-methyl-6-methoxy-1,4-benzoquinol during ubiquinone biosynthesis.</text>
</comment>
<comment type="catalytic activity">
    <reaction evidence="1">
        <text>a 5-methoxy-2-methyl-3-(all-trans-polyprenyl)benzene-1,4-diol + AH2 + O2 = a 3-demethylubiquinol + A + H2O</text>
        <dbReference type="Rhea" id="RHEA:50908"/>
        <dbReference type="Rhea" id="RHEA-COMP:10859"/>
        <dbReference type="Rhea" id="RHEA-COMP:10914"/>
        <dbReference type="ChEBI" id="CHEBI:13193"/>
        <dbReference type="ChEBI" id="CHEBI:15377"/>
        <dbReference type="ChEBI" id="CHEBI:15379"/>
        <dbReference type="ChEBI" id="CHEBI:17499"/>
        <dbReference type="ChEBI" id="CHEBI:84167"/>
        <dbReference type="ChEBI" id="CHEBI:84422"/>
        <dbReference type="EC" id="1.14.99.60"/>
    </reaction>
</comment>
<comment type="cofactor">
    <cofactor evidence="1">
        <name>Fe cation</name>
        <dbReference type="ChEBI" id="CHEBI:24875"/>
    </cofactor>
    <text evidence="1">Binds 2 iron ions per subunit.</text>
</comment>
<comment type="pathway">
    <text evidence="1">Cofactor biosynthesis; ubiquinone biosynthesis.</text>
</comment>
<comment type="subcellular location">
    <subcellularLocation>
        <location evidence="1">Cell membrane</location>
        <topology evidence="1">Peripheral membrane protein</topology>
    </subcellularLocation>
</comment>
<comment type="similarity">
    <text evidence="1">Belongs to the COQ7 family.</text>
</comment>
<comment type="sequence caution" evidence="2">
    <conflict type="erroneous initiation">
        <sequence resource="EMBL-CDS" id="ABB73649"/>
    </conflict>
</comment>
<organism>
    <name type="scientific">Nitrosospira multiformis (strain ATCC 25196 / NCIMB 11849 / C 71)</name>
    <dbReference type="NCBI Taxonomy" id="323848"/>
    <lineage>
        <taxon>Bacteria</taxon>
        <taxon>Pseudomonadati</taxon>
        <taxon>Pseudomonadota</taxon>
        <taxon>Betaproteobacteria</taxon>
        <taxon>Nitrosomonadales</taxon>
        <taxon>Nitrosomonadaceae</taxon>
        <taxon>Nitrosospira</taxon>
    </lineage>
</organism>